<organism>
    <name type="scientific">Cuscuta exaltata</name>
    <name type="common">Tall dodder</name>
    <dbReference type="NCBI Taxonomy" id="476139"/>
    <lineage>
        <taxon>Eukaryota</taxon>
        <taxon>Viridiplantae</taxon>
        <taxon>Streptophyta</taxon>
        <taxon>Embryophyta</taxon>
        <taxon>Tracheophyta</taxon>
        <taxon>Spermatophyta</taxon>
        <taxon>Magnoliopsida</taxon>
        <taxon>eudicotyledons</taxon>
        <taxon>Gunneridae</taxon>
        <taxon>Pentapetalae</taxon>
        <taxon>asterids</taxon>
        <taxon>lamiids</taxon>
        <taxon>Solanales</taxon>
        <taxon>Convolvulaceae</taxon>
        <taxon>Cuscuteae</taxon>
        <taxon>Cuscuta</taxon>
        <taxon>Cuscuta subgen. Monogynella</taxon>
    </lineage>
</organism>
<dbReference type="EMBL" id="EU189132">
    <property type="protein sequence ID" value="ABW83704.1"/>
    <property type="molecule type" value="Genomic_DNA"/>
</dbReference>
<dbReference type="RefSeq" id="YP_001542540.1">
    <property type="nucleotide sequence ID" value="NC_009963.1"/>
</dbReference>
<dbReference type="GeneID" id="5729668"/>
<dbReference type="GO" id="GO:0009522">
    <property type="term" value="C:photosystem I"/>
    <property type="evidence" value="ECO:0007669"/>
    <property type="project" value="InterPro"/>
</dbReference>
<dbReference type="GO" id="GO:0055035">
    <property type="term" value="C:plastid thylakoid membrane"/>
    <property type="evidence" value="ECO:0007669"/>
    <property type="project" value="UniProtKB-SubCell"/>
</dbReference>
<dbReference type="GO" id="GO:0015979">
    <property type="term" value="P:photosynthesis"/>
    <property type="evidence" value="ECO:0007669"/>
    <property type="project" value="UniProtKB-UniRule"/>
</dbReference>
<dbReference type="HAMAP" id="MF_00437">
    <property type="entry name" value="Ycf4"/>
    <property type="match status" value="1"/>
</dbReference>
<dbReference type="InterPro" id="IPR003359">
    <property type="entry name" value="PSI_Ycf4_assembly"/>
</dbReference>
<dbReference type="PANTHER" id="PTHR33288">
    <property type="match status" value="1"/>
</dbReference>
<dbReference type="PANTHER" id="PTHR33288:SF4">
    <property type="entry name" value="PHOTOSYSTEM I ASSEMBLY PROTEIN YCF4"/>
    <property type="match status" value="1"/>
</dbReference>
<dbReference type="Pfam" id="PF02392">
    <property type="entry name" value="Ycf4"/>
    <property type="match status" value="1"/>
</dbReference>
<name>YCF4_CUSEX</name>
<feature type="chain" id="PRO_0000326003" description="Photosystem I assembly protein Ycf4">
    <location>
        <begin position="1"/>
        <end position="184"/>
    </location>
</feature>
<feature type="transmembrane region" description="Helical" evidence="1">
    <location>
        <begin position="19"/>
        <end position="39"/>
    </location>
</feature>
<feature type="transmembrane region" description="Helical" evidence="1">
    <location>
        <begin position="57"/>
        <end position="77"/>
    </location>
</feature>
<keyword id="KW-0472">Membrane</keyword>
<keyword id="KW-0602">Photosynthesis</keyword>
<keyword id="KW-0934">Plastid</keyword>
<keyword id="KW-0793">Thylakoid</keyword>
<keyword id="KW-0812">Transmembrane</keyword>
<keyword id="KW-1133">Transmembrane helix</keyword>
<reference key="1">
    <citation type="journal article" date="2007" name="BMC Plant Biol.">
        <title>Complete plastid genome sequences suggest strong selection for retention of photosynthetic genes in the parasitic plant genus Cuscuta.</title>
        <authorList>
            <person name="McNeal J.R."/>
            <person name="Kuehl J.V."/>
            <person name="Boore J.L."/>
            <person name="dePamphilis C.W."/>
        </authorList>
    </citation>
    <scope>NUCLEOTIDE SEQUENCE [LARGE SCALE GENOMIC DNA]</scope>
</reference>
<geneLocation type="plastid"/>
<proteinExistence type="inferred from homology"/>
<accession>A8W3D3</accession>
<gene>
    <name evidence="1" type="primary">ycf4</name>
</gene>
<protein>
    <recommendedName>
        <fullName evidence="1">Photosystem I assembly protein Ycf4</fullName>
    </recommendedName>
</protein>
<comment type="function">
    <text evidence="1">Seems to be required for the assembly of the photosystem I complex.</text>
</comment>
<comment type="subcellular location">
    <subcellularLocation>
        <location evidence="2">Plastid thylakoid membrane</location>
        <topology evidence="1">Multi-pass membrane protein</topology>
    </subcellularLocation>
</comment>
<comment type="similarity">
    <text evidence="1">Belongs to the Ycf4 family.</text>
</comment>
<comment type="caution">
    <text evidence="2">Young tissue from this organism is photosynthetic and contains some thylakoids, although the photosynthetic activity does not exceed the light compensation point.</text>
</comment>
<evidence type="ECO:0000255" key="1">
    <source>
        <dbReference type="HAMAP-Rule" id="MF_00437"/>
    </source>
</evidence>
<evidence type="ECO:0000305" key="2"/>
<sequence>MSWRSEHIWIELIAGSRKISNLCWAFILFLGSLGFFLVGTSSYLGRNLISFFPLQQIIFFPQGIVMSFYGIAGLFISSYLWCTISWNVGSGYDLFNRKEGIVCIFRWGFPGINRRIFLRFLLKDIRSVRIEVEEGIYAGRVLYMDIRGQRAIPLTRTDENLTPGEIEKKAAELAYFLRVPIEVF</sequence>